<accession>B5XL15</accession>
<reference key="1">
    <citation type="journal article" date="2008" name="J. Bacteriol.">
        <title>Genome sequence of a nephritogenic and highly transformable M49 strain of Streptococcus pyogenes.</title>
        <authorList>
            <person name="McShan W.M."/>
            <person name="Ferretti J.J."/>
            <person name="Karasawa T."/>
            <person name="Suvorov A.N."/>
            <person name="Lin S."/>
            <person name="Qin B."/>
            <person name="Jia H."/>
            <person name="Kenton S."/>
            <person name="Najar F."/>
            <person name="Wu H."/>
            <person name="Scott J."/>
            <person name="Roe B.A."/>
            <person name="Savic D.J."/>
        </authorList>
    </citation>
    <scope>NUCLEOTIDE SEQUENCE [LARGE SCALE GENOMIC DNA]</scope>
    <source>
        <strain>NZ131</strain>
    </source>
</reference>
<organism>
    <name type="scientific">Streptococcus pyogenes serotype M49 (strain NZ131)</name>
    <dbReference type="NCBI Taxonomy" id="471876"/>
    <lineage>
        <taxon>Bacteria</taxon>
        <taxon>Bacillati</taxon>
        <taxon>Bacillota</taxon>
        <taxon>Bacilli</taxon>
        <taxon>Lactobacillales</taxon>
        <taxon>Streptococcaceae</taxon>
        <taxon>Streptococcus</taxon>
    </lineage>
</organism>
<feature type="chain" id="PRO_1000138565" description="Orotidine 5'-phosphate decarboxylase">
    <location>
        <begin position="1"/>
        <end position="230"/>
    </location>
</feature>
<feature type="active site" description="Proton donor" evidence="1">
    <location>
        <position position="63"/>
    </location>
</feature>
<feature type="binding site" evidence="1">
    <location>
        <position position="11"/>
    </location>
    <ligand>
        <name>substrate</name>
    </ligand>
</feature>
<feature type="binding site" evidence="1">
    <location>
        <position position="34"/>
    </location>
    <ligand>
        <name>substrate</name>
    </ligand>
</feature>
<feature type="binding site" evidence="1">
    <location>
        <begin position="61"/>
        <end position="70"/>
    </location>
    <ligand>
        <name>substrate</name>
    </ligand>
</feature>
<feature type="binding site" evidence="1">
    <location>
        <position position="117"/>
    </location>
    <ligand>
        <name>substrate</name>
    </ligand>
</feature>
<feature type="binding site" evidence="1">
    <location>
        <position position="179"/>
    </location>
    <ligand>
        <name>substrate</name>
    </ligand>
</feature>
<feature type="binding site" evidence="1">
    <location>
        <position position="188"/>
    </location>
    <ligand>
        <name>substrate</name>
    </ligand>
</feature>
<feature type="binding site" evidence="1">
    <location>
        <position position="208"/>
    </location>
    <ligand>
        <name>substrate</name>
    </ligand>
</feature>
<feature type="binding site" evidence="1">
    <location>
        <position position="209"/>
    </location>
    <ligand>
        <name>substrate</name>
    </ligand>
</feature>
<proteinExistence type="inferred from homology"/>
<sequence>MKEERPIIALDFSSFEETKAFLDLFPAEEKLYVKIGMELYYAQGPDIVRYIKSLGHNVFLDLKLHDIPNTVRAAMAVLKELDIDMATVHAAGGVEMLKAAREGLGQGPTLIAVTQLTSTSEDQMRGDQNIQTSLLESVLHYSKGAAKAQLDGVVCSAQEVEAIKAVTPTGFNCLTPGIRPKGSNIGDQKRVMTPNQARRIGSDYIVVGRPITQAKDPVATYQAIKAEWAG</sequence>
<evidence type="ECO:0000255" key="1">
    <source>
        <dbReference type="HAMAP-Rule" id="MF_01200"/>
    </source>
</evidence>
<dbReference type="EC" id="4.1.1.23" evidence="1"/>
<dbReference type="EMBL" id="CP000829">
    <property type="protein sequence ID" value="ACI61027.1"/>
    <property type="molecule type" value="Genomic_DNA"/>
</dbReference>
<dbReference type="SMR" id="B5XL15"/>
<dbReference type="KEGG" id="soz:Spy49_0712"/>
<dbReference type="HOGENOM" id="CLU_067069_1_1_9"/>
<dbReference type="UniPathway" id="UPA00070">
    <property type="reaction ID" value="UER00120"/>
</dbReference>
<dbReference type="Proteomes" id="UP000001039">
    <property type="component" value="Chromosome"/>
</dbReference>
<dbReference type="GO" id="GO:0005829">
    <property type="term" value="C:cytosol"/>
    <property type="evidence" value="ECO:0007669"/>
    <property type="project" value="TreeGrafter"/>
</dbReference>
<dbReference type="GO" id="GO:0004590">
    <property type="term" value="F:orotidine-5'-phosphate decarboxylase activity"/>
    <property type="evidence" value="ECO:0007669"/>
    <property type="project" value="UniProtKB-UniRule"/>
</dbReference>
<dbReference type="GO" id="GO:0006207">
    <property type="term" value="P:'de novo' pyrimidine nucleobase biosynthetic process"/>
    <property type="evidence" value="ECO:0007669"/>
    <property type="project" value="InterPro"/>
</dbReference>
<dbReference type="GO" id="GO:0044205">
    <property type="term" value="P:'de novo' UMP biosynthetic process"/>
    <property type="evidence" value="ECO:0007669"/>
    <property type="project" value="UniProtKB-UniRule"/>
</dbReference>
<dbReference type="CDD" id="cd04725">
    <property type="entry name" value="OMP_decarboxylase_like"/>
    <property type="match status" value="1"/>
</dbReference>
<dbReference type="FunFam" id="3.20.20.70:FF:000015">
    <property type="entry name" value="Orotidine 5'-phosphate decarboxylase"/>
    <property type="match status" value="1"/>
</dbReference>
<dbReference type="Gene3D" id="3.20.20.70">
    <property type="entry name" value="Aldolase class I"/>
    <property type="match status" value="1"/>
</dbReference>
<dbReference type="HAMAP" id="MF_01200_B">
    <property type="entry name" value="OMPdecase_type1_B"/>
    <property type="match status" value="1"/>
</dbReference>
<dbReference type="InterPro" id="IPR013785">
    <property type="entry name" value="Aldolase_TIM"/>
</dbReference>
<dbReference type="InterPro" id="IPR014732">
    <property type="entry name" value="OMPdecase"/>
</dbReference>
<dbReference type="InterPro" id="IPR018089">
    <property type="entry name" value="OMPdecase_AS"/>
</dbReference>
<dbReference type="InterPro" id="IPR047596">
    <property type="entry name" value="OMPdecase_bac"/>
</dbReference>
<dbReference type="InterPro" id="IPR001754">
    <property type="entry name" value="OMPdeCOase_dom"/>
</dbReference>
<dbReference type="InterPro" id="IPR011060">
    <property type="entry name" value="RibuloseP-bd_barrel"/>
</dbReference>
<dbReference type="NCBIfam" id="NF001273">
    <property type="entry name" value="PRK00230.1"/>
    <property type="match status" value="1"/>
</dbReference>
<dbReference type="NCBIfam" id="TIGR01740">
    <property type="entry name" value="pyrF"/>
    <property type="match status" value="1"/>
</dbReference>
<dbReference type="PANTHER" id="PTHR32119">
    <property type="entry name" value="OROTIDINE 5'-PHOSPHATE DECARBOXYLASE"/>
    <property type="match status" value="1"/>
</dbReference>
<dbReference type="PANTHER" id="PTHR32119:SF2">
    <property type="entry name" value="OROTIDINE 5'-PHOSPHATE DECARBOXYLASE"/>
    <property type="match status" value="1"/>
</dbReference>
<dbReference type="Pfam" id="PF00215">
    <property type="entry name" value="OMPdecase"/>
    <property type="match status" value="1"/>
</dbReference>
<dbReference type="SMART" id="SM00934">
    <property type="entry name" value="OMPdecase"/>
    <property type="match status" value="1"/>
</dbReference>
<dbReference type="SUPFAM" id="SSF51366">
    <property type="entry name" value="Ribulose-phoshate binding barrel"/>
    <property type="match status" value="1"/>
</dbReference>
<dbReference type="PROSITE" id="PS00156">
    <property type="entry name" value="OMPDECASE"/>
    <property type="match status" value="1"/>
</dbReference>
<gene>
    <name evidence="1" type="primary">pyrF</name>
    <name type="ordered locus">Spy49_0712</name>
</gene>
<keyword id="KW-0210">Decarboxylase</keyword>
<keyword id="KW-0456">Lyase</keyword>
<keyword id="KW-0665">Pyrimidine biosynthesis</keyword>
<name>PYRF_STRPZ</name>
<comment type="function">
    <text evidence="1">Catalyzes the decarboxylation of orotidine 5'-monophosphate (OMP) to uridine 5'-monophosphate (UMP).</text>
</comment>
<comment type="catalytic activity">
    <reaction evidence="1">
        <text>orotidine 5'-phosphate + H(+) = UMP + CO2</text>
        <dbReference type="Rhea" id="RHEA:11596"/>
        <dbReference type="ChEBI" id="CHEBI:15378"/>
        <dbReference type="ChEBI" id="CHEBI:16526"/>
        <dbReference type="ChEBI" id="CHEBI:57538"/>
        <dbReference type="ChEBI" id="CHEBI:57865"/>
        <dbReference type="EC" id="4.1.1.23"/>
    </reaction>
</comment>
<comment type="pathway">
    <text evidence="1">Pyrimidine metabolism; UMP biosynthesis via de novo pathway; UMP from orotate: step 2/2.</text>
</comment>
<comment type="subunit">
    <text evidence="1">Homodimer.</text>
</comment>
<comment type="similarity">
    <text evidence="1">Belongs to the OMP decarboxylase family. Type 1 subfamily.</text>
</comment>
<protein>
    <recommendedName>
        <fullName evidence="1">Orotidine 5'-phosphate decarboxylase</fullName>
        <ecNumber evidence="1">4.1.1.23</ecNumber>
    </recommendedName>
    <alternativeName>
        <fullName evidence="1">OMP decarboxylase</fullName>
        <shortName evidence="1">OMPDCase</shortName>
        <shortName evidence="1">OMPdecase</shortName>
    </alternativeName>
</protein>